<protein>
    <recommendedName>
        <fullName evidence="1">2,3-bisphosphoglycerate-dependent phosphoglycerate mutase</fullName>
        <shortName evidence="1">BPG-dependent PGAM</shortName>
        <shortName evidence="1">PGAM</shortName>
        <shortName evidence="1">Phosphoglyceromutase</shortName>
        <shortName evidence="1">dPGM</shortName>
        <ecNumber evidence="1">5.4.2.11</ecNumber>
    </recommendedName>
</protein>
<gene>
    <name evidence="1" type="primary">gpmA</name>
    <name type="ordered locus">BMEA_B1037</name>
</gene>
<evidence type="ECO:0000255" key="1">
    <source>
        <dbReference type="HAMAP-Rule" id="MF_01039"/>
    </source>
</evidence>
<keyword id="KW-0312">Gluconeogenesis</keyword>
<keyword id="KW-0324">Glycolysis</keyword>
<keyword id="KW-0413">Isomerase</keyword>
<accession>C0RMJ1</accession>
<dbReference type="EC" id="5.4.2.11" evidence="1"/>
<dbReference type="EMBL" id="CP001489">
    <property type="protein sequence ID" value="ACO02824.1"/>
    <property type="molecule type" value="Genomic_DNA"/>
</dbReference>
<dbReference type="RefSeq" id="WP_004682476.1">
    <property type="nucleotide sequence ID" value="NC_012442.1"/>
</dbReference>
<dbReference type="SMR" id="C0RMJ1"/>
<dbReference type="KEGG" id="bmi:BMEA_B1037"/>
<dbReference type="HOGENOM" id="CLU_033323_1_4_5"/>
<dbReference type="UniPathway" id="UPA00109">
    <property type="reaction ID" value="UER00186"/>
</dbReference>
<dbReference type="Proteomes" id="UP000001748">
    <property type="component" value="Chromosome II"/>
</dbReference>
<dbReference type="GO" id="GO:0004619">
    <property type="term" value="F:phosphoglycerate mutase activity"/>
    <property type="evidence" value="ECO:0007669"/>
    <property type="project" value="UniProtKB-EC"/>
</dbReference>
<dbReference type="GO" id="GO:0006094">
    <property type="term" value="P:gluconeogenesis"/>
    <property type="evidence" value="ECO:0007669"/>
    <property type="project" value="UniProtKB-UniRule"/>
</dbReference>
<dbReference type="GO" id="GO:0006096">
    <property type="term" value="P:glycolytic process"/>
    <property type="evidence" value="ECO:0007669"/>
    <property type="project" value="UniProtKB-UniRule"/>
</dbReference>
<dbReference type="CDD" id="cd07067">
    <property type="entry name" value="HP_PGM_like"/>
    <property type="match status" value="1"/>
</dbReference>
<dbReference type="Gene3D" id="3.40.50.1240">
    <property type="entry name" value="Phosphoglycerate mutase-like"/>
    <property type="match status" value="1"/>
</dbReference>
<dbReference type="HAMAP" id="MF_01039">
    <property type="entry name" value="PGAM_GpmA"/>
    <property type="match status" value="1"/>
</dbReference>
<dbReference type="InterPro" id="IPR013078">
    <property type="entry name" value="His_Pase_superF_clade-1"/>
</dbReference>
<dbReference type="InterPro" id="IPR029033">
    <property type="entry name" value="His_PPase_superfam"/>
</dbReference>
<dbReference type="InterPro" id="IPR001345">
    <property type="entry name" value="PG/BPGM_mutase_AS"/>
</dbReference>
<dbReference type="InterPro" id="IPR005952">
    <property type="entry name" value="Phosphogly_mut1"/>
</dbReference>
<dbReference type="NCBIfam" id="TIGR01258">
    <property type="entry name" value="pgm_1"/>
    <property type="match status" value="1"/>
</dbReference>
<dbReference type="NCBIfam" id="NF002339">
    <property type="entry name" value="PRK01295.1"/>
    <property type="match status" value="1"/>
</dbReference>
<dbReference type="PANTHER" id="PTHR11931">
    <property type="entry name" value="PHOSPHOGLYCERATE MUTASE"/>
    <property type="match status" value="1"/>
</dbReference>
<dbReference type="Pfam" id="PF00300">
    <property type="entry name" value="His_Phos_1"/>
    <property type="match status" value="1"/>
</dbReference>
<dbReference type="PIRSF" id="PIRSF000709">
    <property type="entry name" value="6PFK_2-Ptase"/>
    <property type="match status" value="1"/>
</dbReference>
<dbReference type="SMART" id="SM00855">
    <property type="entry name" value="PGAM"/>
    <property type="match status" value="1"/>
</dbReference>
<dbReference type="SUPFAM" id="SSF53254">
    <property type="entry name" value="Phosphoglycerate mutase-like"/>
    <property type="match status" value="1"/>
</dbReference>
<dbReference type="PROSITE" id="PS00175">
    <property type="entry name" value="PG_MUTASE"/>
    <property type="match status" value="1"/>
</dbReference>
<comment type="function">
    <text evidence="1">Catalyzes the interconversion of 2-phosphoglycerate and 3-phosphoglycerate.</text>
</comment>
<comment type="catalytic activity">
    <reaction evidence="1">
        <text>(2R)-2-phosphoglycerate = (2R)-3-phosphoglycerate</text>
        <dbReference type="Rhea" id="RHEA:15901"/>
        <dbReference type="ChEBI" id="CHEBI:58272"/>
        <dbReference type="ChEBI" id="CHEBI:58289"/>
        <dbReference type="EC" id="5.4.2.11"/>
    </reaction>
</comment>
<comment type="pathway">
    <text evidence="1">Carbohydrate degradation; glycolysis; pyruvate from D-glyceraldehyde 3-phosphate: step 3/5.</text>
</comment>
<comment type="subunit">
    <text evidence="1">Homodimer.</text>
</comment>
<comment type="similarity">
    <text evidence="1">Belongs to the phosphoglycerate mutase family. BPG-dependent PGAM subfamily.</text>
</comment>
<organism>
    <name type="scientific">Brucella melitensis biotype 2 (strain ATCC 23457)</name>
    <dbReference type="NCBI Taxonomy" id="546272"/>
    <lineage>
        <taxon>Bacteria</taxon>
        <taxon>Pseudomonadati</taxon>
        <taxon>Pseudomonadota</taxon>
        <taxon>Alphaproteobacteria</taxon>
        <taxon>Hyphomicrobiales</taxon>
        <taxon>Brucellaceae</taxon>
        <taxon>Brucella/Ochrobactrum group</taxon>
        <taxon>Brucella</taxon>
    </lineage>
</organism>
<sequence length="206" mass="22900">MSRTLVLVRHGQSEWNLKNLFTGWRDPGLTEQGHAEAKAAGQRLKAAGLKFDIAYTSALSRAQVTCQHILDELGQPGLETIRDQALNERDYGDLSGLNKDDARAKWGEEQVHIWRRSYDVPPPGGESLKDTGARVWPYYLHTIQPHVLREETVLVAAHGNSLRALIMALEGLTPEQILKQELNTGVPIIYRLNADSTVASKEILSA</sequence>
<feature type="chain" id="PRO_1000149506" description="2,3-bisphosphoglycerate-dependent phosphoglycerate mutase">
    <location>
        <begin position="1"/>
        <end position="206"/>
    </location>
</feature>
<feature type="active site" description="Tele-phosphohistidine intermediate" evidence="1">
    <location>
        <position position="10"/>
    </location>
</feature>
<feature type="active site" description="Proton donor/acceptor" evidence="1">
    <location>
        <position position="88"/>
    </location>
</feature>
<feature type="binding site" evidence="1">
    <location>
        <begin position="9"/>
        <end position="16"/>
    </location>
    <ligand>
        <name>substrate</name>
    </ligand>
</feature>
<feature type="binding site" evidence="1">
    <location>
        <begin position="22"/>
        <end position="23"/>
    </location>
    <ligand>
        <name>substrate</name>
    </ligand>
</feature>
<feature type="binding site" evidence="1">
    <location>
        <position position="61"/>
    </location>
    <ligand>
        <name>substrate</name>
    </ligand>
</feature>
<feature type="binding site" evidence="1">
    <location>
        <begin position="88"/>
        <end position="91"/>
    </location>
    <ligand>
        <name>substrate</name>
    </ligand>
</feature>
<feature type="binding site" evidence="1">
    <location>
        <position position="99"/>
    </location>
    <ligand>
        <name>substrate</name>
    </ligand>
</feature>
<feature type="binding site" evidence="1">
    <location>
        <begin position="115"/>
        <end position="116"/>
    </location>
    <ligand>
        <name>substrate</name>
    </ligand>
</feature>
<feature type="binding site" evidence="1">
    <location>
        <begin position="159"/>
        <end position="160"/>
    </location>
    <ligand>
        <name>substrate</name>
    </ligand>
</feature>
<feature type="site" description="Transition state stabilizer" evidence="1">
    <location>
        <position position="158"/>
    </location>
</feature>
<reference key="1">
    <citation type="submission" date="2009-03" db="EMBL/GenBank/DDBJ databases">
        <title>Brucella melitensis ATCC 23457 whole genome shotgun sequencing project.</title>
        <authorList>
            <person name="Setubal J.C."/>
            <person name="Boyle S."/>
            <person name="Crasta O.R."/>
            <person name="Gillespie J.J."/>
            <person name="Kenyon R.W."/>
            <person name="Lu J."/>
            <person name="Mane S."/>
            <person name="Nagrani S."/>
            <person name="Shallom J.M."/>
            <person name="Shallom S."/>
            <person name="Shukla M."/>
            <person name="Snyder E.E."/>
            <person name="Sobral B.W."/>
            <person name="Wattam A.R."/>
            <person name="Will R."/>
            <person name="Williams K."/>
            <person name="Yoo H."/>
            <person name="Munk C."/>
            <person name="Tapia R."/>
            <person name="Han C."/>
            <person name="Detter J.C."/>
            <person name="Bruce D."/>
            <person name="Brettin T.S."/>
        </authorList>
    </citation>
    <scope>NUCLEOTIDE SEQUENCE [LARGE SCALE GENOMIC DNA]</scope>
    <source>
        <strain>ATCC 23457</strain>
    </source>
</reference>
<proteinExistence type="inferred from homology"/>
<name>GPMA_BRUMB</name>